<accession>B4TUJ9</accession>
<comment type="function">
    <text evidence="1">Involved in the anomeric conversion of L-fucose.</text>
</comment>
<comment type="catalytic activity">
    <reaction evidence="1">
        <text>alpha-L-fucose = beta-L-fucose</text>
        <dbReference type="Rhea" id="RHEA:25580"/>
        <dbReference type="ChEBI" id="CHEBI:42548"/>
        <dbReference type="ChEBI" id="CHEBI:42589"/>
        <dbReference type="EC" id="5.1.3.29"/>
    </reaction>
</comment>
<comment type="pathway">
    <text evidence="1">Carbohydrate metabolism; L-fucose metabolism.</text>
</comment>
<comment type="subunit">
    <text evidence="1">Homodecamer.</text>
</comment>
<comment type="subcellular location">
    <subcellularLocation>
        <location evidence="1">Cytoplasm</location>
    </subcellularLocation>
</comment>
<comment type="similarity">
    <text evidence="1">Belongs to the RbsD / FucU family. FucU mutarotase subfamily.</text>
</comment>
<protein>
    <recommendedName>
        <fullName evidence="1">L-fucose mutarotase</fullName>
        <ecNumber evidence="1">5.1.3.29</ecNumber>
    </recommendedName>
    <alternativeName>
        <fullName evidence="1">Fucose 1-epimerase</fullName>
    </alternativeName>
    <alternativeName>
        <fullName evidence="1">Type-2 mutarotase</fullName>
    </alternativeName>
</protein>
<reference key="1">
    <citation type="journal article" date="2011" name="J. Bacteriol.">
        <title>Comparative genomics of 28 Salmonella enterica isolates: evidence for CRISPR-mediated adaptive sublineage evolution.</title>
        <authorList>
            <person name="Fricke W.F."/>
            <person name="Mammel M.K."/>
            <person name="McDermott P.F."/>
            <person name="Tartera C."/>
            <person name="White D.G."/>
            <person name="Leclerc J.E."/>
            <person name="Ravel J."/>
            <person name="Cebula T.A."/>
        </authorList>
    </citation>
    <scope>NUCLEOTIDE SEQUENCE [LARGE SCALE GENOMIC DNA]</scope>
    <source>
        <strain>CVM19633</strain>
    </source>
</reference>
<keyword id="KW-0119">Carbohydrate metabolism</keyword>
<keyword id="KW-0963">Cytoplasm</keyword>
<keyword id="KW-0294">Fucose metabolism</keyword>
<keyword id="KW-0413">Isomerase</keyword>
<gene>
    <name evidence="1" type="primary">fucU</name>
    <name type="ordered locus">SeSA_A3140</name>
</gene>
<sequence>MLKTISPLISPTLLKVLAEMGHGDEIIFSDAHFPAHSLGPQVIRADGLSVSDLLRAIIPLFELDSYAPPLVMMAAVEGDTLDPSVEARYRDALSLEAPCPDIVRIDRYAFYERAQKAFAIVITGECAKYGNILLKKGVTP</sequence>
<name>FUCM_SALSV</name>
<organism>
    <name type="scientific">Salmonella schwarzengrund (strain CVM19633)</name>
    <dbReference type="NCBI Taxonomy" id="439843"/>
    <lineage>
        <taxon>Bacteria</taxon>
        <taxon>Pseudomonadati</taxon>
        <taxon>Pseudomonadota</taxon>
        <taxon>Gammaproteobacteria</taxon>
        <taxon>Enterobacterales</taxon>
        <taxon>Enterobacteriaceae</taxon>
        <taxon>Salmonella</taxon>
    </lineage>
</organism>
<evidence type="ECO:0000255" key="1">
    <source>
        <dbReference type="HAMAP-Rule" id="MF_01662"/>
    </source>
</evidence>
<dbReference type="EC" id="5.1.3.29" evidence="1"/>
<dbReference type="EMBL" id="CP001127">
    <property type="protein sequence ID" value="ACF92871.1"/>
    <property type="molecule type" value="Genomic_DNA"/>
</dbReference>
<dbReference type="RefSeq" id="WP_000920848.1">
    <property type="nucleotide sequence ID" value="NC_011094.1"/>
</dbReference>
<dbReference type="SMR" id="B4TUJ9"/>
<dbReference type="KEGG" id="sew:SeSA_A3140"/>
<dbReference type="HOGENOM" id="CLU_120075_1_0_6"/>
<dbReference type="UniPathway" id="UPA00956"/>
<dbReference type="Proteomes" id="UP000001865">
    <property type="component" value="Chromosome"/>
</dbReference>
<dbReference type="GO" id="GO:0005737">
    <property type="term" value="C:cytoplasm"/>
    <property type="evidence" value="ECO:0007669"/>
    <property type="project" value="UniProtKB-SubCell"/>
</dbReference>
<dbReference type="GO" id="GO:0042806">
    <property type="term" value="F:fucose binding"/>
    <property type="evidence" value="ECO:0007669"/>
    <property type="project" value="InterPro"/>
</dbReference>
<dbReference type="GO" id="GO:0036373">
    <property type="term" value="F:L-fucose mutarotase activity"/>
    <property type="evidence" value="ECO:0007669"/>
    <property type="project" value="UniProtKB-EC"/>
</dbReference>
<dbReference type="GO" id="GO:0036065">
    <property type="term" value="P:fucosylation"/>
    <property type="evidence" value="ECO:0007669"/>
    <property type="project" value="TreeGrafter"/>
</dbReference>
<dbReference type="GO" id="GO:0042354">
    <property type="term" value="P:L-fucose metabolic process"/>
    <property type="evidence" value="ECO:0007669"/>
    <property type="project" value="UniProtKB-UniRule"/>
</dbReference>
<dbReference type="FunFam" id="3.40.1650.10:FF:000001">
    <property type="entry name" value="L-fucose mutarotase"/>
    <property type="match status" value="1"/>
</dbReference>
<dbReference type="Gene3D" id="3.40.1650.10">
    <property type="entry name" value="RbsD-like domain"/>
    <property type="match status" value="1"/>
</dbReference>
<dbReference type="HAMAP" id="MF_01662">
    <property type="entry name" value="L_fucose_rotase"/>
    <property type="match status" value="1"/>
</dbReference>
<dbReference type="InterPro" id="IPR023751">
    <property type="entry name" value="L-fucose_mutarotase"/>
</dbReference>
<dbReference type="InterPro" id="IPR023750">
    <property type="entry name" value="RbsD-like_sf"/>
</dbReference>
<dbReference type="InterPro" id="IPR050443">
    <property type="entry name" value="RbsD/FucU_mutarotase"/>
</dbReference>
<dbReference type="InterPro" id="IPR007721">
    <property type="entry name" value="RbsD_FucU"/>
</dbReference>
<dbReference type="NCBIfam" id="NF011949">
    <property type="entry name" value="PRK15420.1"/>
    <property type="match status" value="1"/>
</dbReference>
<dbReference type="PANTHER" id="PTHR31690">
    <property type="entry name" value="FUCOSE MUTAROTASE"/>
    <property type="match status" value="1"/>
</dbReference>
<dbReference type="PANTHER" id="PTHR31690:SF4">
    <property type="entry name" value="FUCOSE MUTAROTASE"/>
    <property type="match status" value="1"/>
</dbReference>
<dbReference type="Pfam" id="PF05025">
    <property type="entry name" value="RbsD_FucU"/>
    <property type="match status" value="1"/>
</dbReference>
<dbReference type="SUPFAM" id="SSF102546">
    <property type="entry name" value="RbsD-like"/>
    <property type="match status" value="1"/>
</dbReference>
<feature type="chain" id="PRO_1000187201" description="L-fucose mutarotase">
    <location>
        <begin position="1"/>
        <end position="140"/>
    </location>
</feature>
<feature type="active site" description="Proton donor" evidence="1">
    <location>
        <position position="22"/>
    </location>
</feature>
<feature type="binding site" evidence="1">
    <location>
        <position position="30"/>
    </location>
    <ligand>
        <name>substrate</name>
    </ligand>
</feature>
<feature type="binding site" evidence="1">
    <location>
        <position position="107"/>
    </location>
    <ligand>
        <name>substrate</name>
    </ligand>
</feature>
<feature type="binding site" evidence="1">
    <location>
        <begin position="129"/>
        <end position="131"/>
    </location>
    <ligand>
        <name>substrate</name>
    </ligand>
</feature>
<proteinExistence type="inferred from homology"/>